<protein>
    <recommendedName>
        <fullName evidence="1">Sugar fermentation stimulation protein homolog</fullName>
    </recommendedName>
</protein>
<name>SFSA_PSEPF</name>
<proteinExistence type="inferred from homology"/>
<organism>
    <name type="scientific">Pseudomonas fluorescens (strain Pf0-1)</name>
    <dbReference type="NCBI Taxonomy" id="205922"/>
    <lineage>
        <taxon>Bacteria</taxon>
        <taxon>Pseudomonadati</taxon>
        <taxon>Pseudomonadota</taxon>
        <taxon>Gammaproteobacteria</taxon>
        <taxon>Pseudomonadales</taxon>
        <taxon>Pseudomonadaceae</taxon>
        <taxon>Pseudomonas</taxon>
    </lineage>
</organism>
<sequence length="237" mass="26156">MRFHPPLEEGRLIRRYKRFLADIETVGGELLTIHCPNTGSMLNCQVEGGQVWFSRSNDPKRKLPGTWEVGETPQGRLFCVNTGRANALVEEALQAGVINELNGFTGLKREVAYGQEKSRIDFRLDYPTGPAYVEVKSVTLGFDGTAVAAFPDAVTERGAKHLRELAHLARDGIRAVQLYCVNLTGVEAVRPAEEIDFAYAAALREAVACGVEVLAYGVRLSHEEMVIDRRLDVLLNG</sequence>
<dbReference type="EMBL" id="CP000094">
    <property type="protein sequence ID" value="ABA76539.1"/>
    <property type="molecule type" value="Genomic_DNA"/>
</dbReference>
<dbReference type="RefSeq" id="WP_011335964.1">
    <property type="nucleotide sequence ID" value="NC_007492.2"/>
</dbReference>
<dbReference type="SMR" id="Q3K6R5"/>
<dbReference type="KEGG" id="pfo:Pfl01_4802"/>
<dbReference type="eggNOG" id="COG1489">
    <property type="taxonomic scope" value="Bacteria"/>
</dbReference>
<dbReference type="HOGENOM" id="CLU_052299_2_0_6"/>
<dbReference type="Proteomes" id="UP000002704">
    <property type="component" value="Chromosome"/>
</dbReference>
<dbReference type="GO" id="GO:0003677">
    <property type="term" value="F:DNA binding"/>
    <property type="evidence" value="ECO:0007669"/>
    <property type="project" value="InterPro"/>
</dbReference>
<dbReference type="CDD" id="cd22359">
    <property type="entry name" value="SfsA-like_bacterial"/>
    <property type="match status" value="1"/>
</dbReference>
<dbReference type="FunFam" id="2.40.50.580:FF:000001">
    <property type="entry name" value="Sugar fermentation stimulation protein A"/>
    <property type="match status" value="1"/>
</dbReference>
<dbReference type="Gene3D" id="2.40.50.580">
    <property type="match status" value="1"/>
</dbReference>
<dbReference type="Gene3D" id="3.40.1350.60">
    <property type="match status" value="1"/>
</dbReference>
<dbReference type="HAMAP" id="MF_00095">
    <property type="entry name" value="SfsA"/>
    <property type="match status" value="1"/>
</dbReference>
<dbReference type="InterPro" id="IPR005224">
    <property type="entry name" value="SfsA"/>
</dbReference>
<dbReference type="InterPro" id="IPR040452">
    <property type="entry name" value="SfsA_C"/>
</dbReference>
<dbReference type="InterPro" id="IPR041465">
    <property type="entry name" value="SfsA_N"/>
</dbReference>
<dbReference type="NCBIfam" id="TIGR00230">
    <property type="entry name" value="sfsA"/>
    <property type="match status" value="1"/>
</dbReference>
<dbReference type="PANTHER" id="PTHR30545">
    <property type="entry name" value="SUGAR FERMENTATION STIMULATION PROTEIN A"/>
    <property type="match status" value="1"/>
</dbReference>
<dbReference type="PANTHER" id="PTHR30545:SF2">
    <property type="entry name" value="SUGAR FERMENTATION STIMULATION PROTEIN A"/>
    <property type="match status" value="1"/>
</dbReference>
<dbReference type="Pfam" id="PF03749">
    <property type="entry name" value="SfsA"/>
    <property type="match status" value="1"/>
</dbReference>
<dbReference type="Pfam" id="PF17746">
    <property type="entry name" value="SfsA_N"/>
    <property type="match status" value="1"/>
</dbReference>
<comment type="similarity">
    <text evidence="1">Belongs to the SfsA family.</text>
</comment>
<evidence type="ECO:0000255" key="1">
    <source>
        <dbReference type="HAMAP-Rule" id="MF_00095"/>
    </source>
</evidence>
<reference key="1">
    <citation type="journal article" date="2009" name="Genome Biol.">
        <title>Genomic and genetic analyses of diversity and plant interactions of Pseudomonas fluorescens.</title>
        <authorList>
            <person name="Silby M.W."/>
            <person name="Cerdeno-Tarraga A.M."/>
            <person name="Vernikos G.S."/>
            <person name="Giddens S.R."/>
            <person name="Jackson R.W."/>
            <person name="Preston G.M."/>
            <person name="Zhang X.-X."/>
            <person name="Moon C.D."/>
            <person name="Gehrig S.M."/>
            <person name="Godfrey S.A.C."/>
            <person name="Knight C.G."/>
            <person name="Malone J.G."/>
            <person name="Robinson Z."/>
            <person name="Spiers A.J."/>
            <person name="Harris S."/>
            <person name="Challis G.L."/>
            <person name="Yaxley A.M."/>
            <person name="Harris D."/>
            <person name="Seeger K."/>
            <person name="Murphy L."/>
            <person name="Rutter S."/>
            <person name="Squares R."/>
            <person name="Quail M.A."/>
            <person name="Saunders E."/>
            <person name="Mavromatis K."/>
            <person name="Brettin T.S."/>
            <person name="Bentley S.D."/>
            <person name="Hothersall J."/>
            <person name="Stephens E."/>
            <person name="Thomas C.M."/>
            <person name="Parkhill J."/>
            <person name="Levy S.B."/>
            <person name="Rainey P.B."/>
            <person name="Thomson N.R."/>
        </authorList>
    </citation>
    <scope>NUCLEOTIDE SEQUENCE [LARGE SCALE GENOMIC DNA]</scope>
    <source>
        <strain>Pf0-1</strain>
    </source>
</reference>
<accession>Q3K6R5</accession>
<gene>
    <name evidence="1" type="primary">sfsA</name>
    <name type="ordered locus">Pfl01_4802</name>
</gene>
<feature type="chain" id="PRO_1000008015" description="Sugar fermentation stimulation protein homolog">
    <location>
        <begin position="1"/>
        <end position="237"/>
    </location>
</feature>